<sequence>MTENRYELNKNLAQMLKGGVIMDVQNPEQARIAEAAGAAAVMALERIPADIRAAGGVSRMSDPKMIKEIQEAVSIPVMAKVRIGHFVEAQILEAIEIDYIDESEVLSPADDRFHVDKKEFQVPFVCGAKDLGEALRRIAEGASMIRTKGEPGTGDIVQAVRHMRMMNQEIRRIQNLREDELYVAAKDLQVPVELVQYVHEHGKLPVVNFAAGGVATPADAALMMQLGAEGVFVGSGIFKSGDPVKRASAIVKAVTNFRNPQILAQISEDLGEAMVGINENEIQILMAERGK</sequence>
<reference key="1">
    <citation type="journal article" date="2001" name="J. Bacteriol.">
        <title>Genome of the bacterium Streptococcus pneumoniae strain R6.</title>
        <authorList>
            <person name="Hoskins J."/>
            <person name="Alborn W.E. Jr."/>
            <person name="Arnold J."/>
            <person name="Blaszczak L.C."/>
            <person name="Burgett S."/>
            <person name="DeHoff B.S."/>
            <person name="Estrem S.T."/>
            <person name="Fritz L."/>
            <person name="Fu D.-J."/>
            <person name="Fuller W."/>
            <person name="Geringer C."/>
            <person name="Gilmour R."/>
            <person name="Glass J.S."/>
            <person name="Khoja H."/>
            <person name="Kraft A.R."/>
            <person name="Lagace R.E."/>
            <person name="LeBlanc D.J."/>
            <person name="Lee L.N."/>
            <person name="Lefkowitz E.J."/>
            <person name="Lu J."/>
            <person name="Matsushima P."/>
            <person name="McAhren S.M."/>
            <person name="McHenney M."/>
            <person name="McLeaster K."/>
            <person name="Mundy C.W."/>
            <person name="Nicas T.I."/>
            <person name="Norris F.H."/>
            <person name="O'Gara M."/>
            <person name="Peery R.B."/>
            <person name="Robertson G.T."/>
            <person name="Rockey P."/>
            <person name="Sun P.-M."/>
            <person name="Winkler M.E."/>
            <person name="Yang Y."/>
            <person name="Young-Bellido M."/>
            <person name="Zhao G."/>
            <person name="Zook C.A."/>
            <person name="Baltz R.H."/>
            <person name="Jaskunas S.R."/>
            <person name="Rosteck P.R. Jr."/>
            <person name="Skatrud P.L."/>
            <person name="Glass J.I."/>
        </authorList>
    </citation>
    <scope>NUCLEOTIDE SEQUENCE [LARGE SCALE GENOMIC DNA]</scope>
    <source>
        <strain>ATCC BAA-255 / R6</strain>
    </source>
</reference>
<dbReference type="EC" id="4.3.3.6" evidence="1"/>
<dbReference type="EMBL" id="AE007317">
    <property type="protein sequence ID" value="AAL00126.1"/>
    <property type="status" value="ALT_INIT"/>
    <property type="molecule type" value="Genomic_DNA"/>
</dbReference>
<dbReference type="PIR" id="A98037">
    <property type="entry name" value="A98037"/>
</dbReference>
<dbReference type="RefSeq" id="NP_358915.1">
    <property type="nucleotide sequence ID" value="NC_003098.1"/>
</dbReference>
<dbReference type="RefSeq" id="WP_000138517.1">
    <property type="nucleotide sequence ID" value="NC_003098.1"/>
</dbReference>
<dbReference type="SMR" id="Q8DP71"/>
<dbReference type="STRING" id="171101.spr1322"/>
<dbReference type="GeneID" id="45653282"/>
<dbReference type="KEGG" id="spr:spr1322"/>
<dbReference type="PATRIC" id="fig|171101.6.peg.1434"/>
<dbReference type="eggNOG" id="COG0214">
    <property type="taxonomic scope" value="Bacteria"/>
</dbReference>
<dbReference type="HOGENOM" id="CLU_055352_1_0_9"/>
<dbReference type="UniPathway" id="UPA00245"/>
<dbReference type="Proteomes" id="UP000000586">
    <property type="component" value="Chromosome"/>
</dbReference>
<dbReference type="GO" id="GO:0016843">
    <property type="term" value="F:amine-lyase activity"/>
    <property type="evidence" value="ECO:0000318"/>
    <property type="project" value="GO_Central"/>
</dbReference>
<dbReference type="GO" id="GO:0036381">
    <property type="term" value="F:pyridoxal 5'-phosphate synthase (glutamine hydrolysing) activity"/>
    <property type="evidence" value="ECO:0007669"/>
    <property type="project" value="UniProtKB-UniRule"/>
</dbReference>
<dbReference type="GO" id="GO:0006520">
    <property type="term" value="P:amino acid metabolic process"/>
    <property type="evidence" value="ECO:0000318"/>
    <property type="project" value="GO_Central"/>
</dbReference>
<dbReference type="GO" id="GO:0042823">
    <property type="term" value="P:pyridoxal phosphate biosynthetic process"/>
    <property type="evidence" value="ECO:0000318"/>
    <property type="project" value="GO_Central"/>
</dbReference>
<dbReference type="GO" id="GO:0008615">
    <property type="term" value="P:pyridoxine biosynthetic process"/>
    <property type="evidence" value="ECO:0000318"/>
    <property type="project" value="GO_Central"/>
</dbReference>
<dbReference type="CDD" id="cd04727">
    <property type="entry name" value="pdxS"/>
    <property type="match status" value="1"/>
</dbReference>
<dbReference type="FunFam" id="3.20.20.70:FF:000001">
    <property type="entry name" value="Pyridoxine biosynthesis protein PDX1"/>
    <property type="match status" value="1"/>
</dbReference>
<dbReference type="Gene3D" id="3.20.20.70">
    <property type="entry name" value="Aldolase class I"/>
    <property type="match status" value="1"/>
</dbReference>
<dbReference type="HAMAP" id="MF_01824">
    <property type="entry name" value="PdxS"/>
    <property type="match status" value="1"/>
</dbReference>
<dbReference type="InterPro" id="IPR013785">
    <property type="entry name" value="Aldolase_TIM"/>
</dbReference>
<dbReference type="InterPro" id="IPR001852">
    <property type="entry name" value="PdxS/SNZ"/>
</dbReference>
<dbReference type="InterPro" id="IPR033755">
    <property type="entry name" value="PdxS/SNZ_N"/>
</dbReference>
<dbReference type="InterPro" id="IPR011060">
    <property type="entry name" value="RibuloseP-bd_barrel"/>
</dbReference>
<dbReference type="NCBIfam" id="NF003215">
    <property type="entry name" value="PRK04180.1"/>
    <property type="match status" value="1"/>
</dbReference>
<dbReference type="NCBIfam" id="TIGR00343">
    <property type="entry name" value="pyridoxal 5'-phosphate synthase lyase subunit PdxS"/>
    <property type="match status" value="1"/>
</dbReference>
<dbReference type="PANTHER" id="PTHR31829">
    <property type="entry name" value="PYRIDOXAL 5'-PHOSPHATE SYNTHASE SUBUNIT SNZ1-RELATED"/>
    <property type="match status" value="1"/>
</dbReference>
<dbReference type="PANTHER" id="PTHR31829:SF0">
    <property type="entry name" value="PYRIDOXAL 5'-PHOSPHATE SYNTHASE SUBUNIT SNZ1-RELATED"/>
    <property type="match status" value="1"/>
</dbReference>
<dbReference type="Pfam" id="PF01680">
    <property type="entry name" value="SOR_SNZ"/>
    <property type="match status" value="1"/>
</dbReference>
<dbReference type="PIRSF" id="PIRSF029271">
    <property type="entry name" value="Pdx1"/>
    <property type="match status" value="1"/>
</dbReference>
<dbReference type="SUPFAM" id="SSF51366">
    <property type="entry name" value="Ribulose-phoshate binding barrel"/>
    <property type="match status" value="1"/>
</dbReference>
<dbReference type="PROSITE" id="PS01235">
    <property type="entry name" value="PDXS_SNZ_1"/>
    <property type="match status" value="1"/>
</dbReference>
<dbReference type="PROSITE" id="PS51129">
    <property type="entry name" value="PDXS_SNZ_2"/>
    <property type="match status" value="1"/>
</dbReference>
<name>PDXS_STRR6</name>
<gene>
    <name evidence="1" type="primary">pdxS</name>
    <name type="ordered locus">spr1322</name>
</gene>
<protein>
    <recommendedName>
        <fullName evidence="1">Pyridoxal 5'-phosphate synthase subunit PdxS</fullName>
        <shortName evidence="1">PLP synthase subunit PdxS</shortName>
        <ecNumber evidence="1">4.3.3.6</ecNumber>
    </recommendedName>
    <alternativeName>
        <fullName evidence="1">Pdx1</fullName>
    </alternativeName>
</protein>
<comment type="function">
    <text evidence="1">Catalyzes the formation of pyridoxal 5'-phosphate from ribose 5-phosphate (RBP), glyceraldehyde 3-phosphate (G3P) and ammonia. The ammonia is provided by the PdxT subunit. Can also use ribulose 5-phosphate and dihydroxyacetone phosphate as substrates, resulting from enzyme-catalyzed isomerization of RBP and G3P, respectively.</text>
</comment>
<comment type="catalytic activity">
    <reaction evidence="1">
        <text>aldehydo-D-ribose 5-phosphate + D-glyceraldehyde 3-phosphate + L-glutamine = pyridoxal 5'-phosphate + L-glutamate + phosphate + 3 H2O + H(+)</text>
        <dbReference type="Rhea" id="RHEA:31507"/>
        <dbReference type="ChEBI" id="CHEBI:15377"/>
        <dbReference type="ChEBI" id="CHEBI:15378"/>
        <dbReference type="ChEBI" id="CHEBI:29985"/>
        <dbReference type="ChEBI" id="CHEBI:43474"/>
        <dbReference type="ChEBI" id="CHEBI:58273"/>
        <dbReference type="ChEBI" id="CHEBI:58359"/>
        <dbReference type="ChEBI" id="CHEBI:59776"/>
        <dbReference type="ChEBI" id="CHEBI:597326"/>
        <dbReference type="EC" id="4.3.3.6"/>
    </reaction>
</comment>
<comment type="pathway">
    <text evidence="1">Cofactor biosynthesis; pyridoxal 5'-phosphate biosynthesis.</text>
</comment>
<comment type="subunit">
    <text evidence="1">In the presence of PdxT, forms a dodecamer of heterodimers.</text>
</comment>
<comment type="similarity">
    <text evidence="1">Belongs to the PdxS/SNZ family.</text>
</comment>
<comment type="sequence caution" evidence="2">
    <conflict type="erroneous initiation">
        <sequence resource="EMBL-CDS" id="AAL00126"/>
    </conflict>
</comment>
<accession>Q8DP71</accession>
<evidence type="ECO:0000255" key="1">
    <source>
        <dbReference type="HAMAP-Rule" id="MF_01824"/>
    </source>
</evidence>
<evidence type="ECO:0000305" key="2"/>
<feature type="chain" id="PRO_0000109422" description="Pyridoxal 5'-phosphate synthase subunit PdxS">
    <location>
        <begin position="1"/>
        <end position="291"/>
    </location>
</feature>
<feature type="active site" description="Schiff-base intermediate with D-ribose 5-phosphate" evidence="1">
    <location>
        <position position="80"/>
    </location>
</feature>
<feature type="binding site" evidence="1">
    <location>
        <position position="23"/>
    </location>
    <ligand>
        <name>D-ribose 5-phosphate</name>
        <dbReference type="ChEBI" id="CHEBI:78346"/>
    </ligand>
</feature>
<feature type="binding site" evidence="1">
    <location>
        <position position="152"/>
    </location>
    <ligand>
        <name>D-ribose 5-phosphate</name>
        <dbReference type="ChEBI" id="CHEBI:78346"/>
    </ligand>
</feature>
<feature type="binding site" evidence="1">
    <location>
        <position position="164"/>
    </location>
    <ligand>
        <name>D-glyceraldehyde 3-phosphate</name>
        <dbReference type="ChEBI" id="CHEBI:59776"/>
    </ligand>
</feature>
<feature type="binding site" evidence="1">
    <location>
        <position position="213"/>
    </location>
    <ligand>
        <name>D-ribose 5-phosphate</name>
        <dbReference type="ChEBI" id="CHEBI:78346"/>
    </ligand>
</feature>
<feature type="binding site" evidence="1">
    <location>
        <begin position="234"/>
        <end position="235"/>
    </location>
    <ligand>
        <name>D-ribose 5-phosphate</name>
        <dbReference type="ChEBI" id="CHEBI:78346"/>
    </ligand>
</feature>
<proteinExistence type="inferred from homology"/>
<keyword id="KW-0456">Lyase</keyword>
<keyword id="KW-0663">Pyridoxal phosphate</keyword>
<keyword id="KW-1185">Reference proteome</keyword>
<keyword id="KW-0704">Schiff base</keyword>
<organism>
    <name type="scientific">Streptococcus pneumoniae (strain ATCC BAA-255 / R6)</name>
    <dbReference type="NCBI Taxonomy" id="171101"/>
    <lineage>
        <taxon>Bacteria</taxon>
        <taxon>Bacillati</taxon>
        <taxon>Bacillota</taxon>
        <taxon>Bacilli</taxon>
        <taxon>Lactobacillales</taxon>
        <taxon>Streptococcaceae</taxon>
        <taxon>Streptococcus</taxon>
    </lineage>
</organism>